<sequence length="412" mass="42330">MARFLLLLVAVAAAAAVLSLGDAAPSTAEVFWRAVLPESPLPDAFLRLLRPDTSFVVGKAEAAGGAARTGFPFDYTDYRGSDSPTTASGLDLAGDFGEPAPFGYDYSAQGEGGGGGAAAAAGEQVLAVDAGFNYDKYVGARKLRGGSSTAGGENDDEPFGYDYKAPSSGSGTAASTTARGVGTGATTTVFFHEEAVRVGERLPFYFPAATTSALGFLPRRVADSIPFTAAALPAVLALFGVAPDTAEAAGMRETLRTCEWPTLAGESKFCATSLEALVEGAMAALGTRDIAALASTLPRGGAPLQAYAVRAVLPVEGAGFVACHDQAYPYTVYRCHTTGPARAYMVEMEGDGGGDGGEAVTVATVCHTNTSRWNPEHVSFKLLGTKPGGSPVCHLMPYGHIVWAKNVKSSTA</sequence>
<comment type="function">
    <text evidence="3">Required for pollen development. Probably synthesized in the tapetum, packaged in Ubisch bodies and transported at appropriate stages to the micropsores.</text>
</comment>
<comment type="tissue specificity">
    <text evidence="3 4">Specifically expressed in anthers, in the tapetum and microspores (at protein level).</text>
</comment>
<comment type="disruption phenotype">
    <text evidence="3">Collapsed pollen with low viability. Almost no seed production.</text>
</comment>
<reference key="1">
    <citation type="journal article" date="2003" name="Proc. Natl. Acad. Sci. U.S.A.">
        <title>The classical Ubisch bodies carry a sporophytically produced structural protein (RAFTIN) that is essential for pollen development.</title>
        <authorList>
            <person name="Wang A."/>
            <person name="Xia Q."/>
            <person name="Xie W."/>
            <person name="Datla R."/>
            <person name="Selvaraj G."/>
        </authorList>
    </citation>
    <scope>NUCLEOTIDE SEQUENCE [GENOMIC DNA / MRNA]</scope>
    <scope>FUNCTION</scope>
    <scope>TISSUE SPECIFICITY</scope>
    <scope>DISRUPTION PHENOTYPE</scope>
    <source>
        <strain>cv. Nipponbare</strain>
        <tissue>Anther</tissue>
    </source>
</reference>
<reference key="2">
    <citation type="journal article" date="2005" name="Nature">
        <title>The map-based sequence of the rice genome.</title>
        <authorList>
            <consortium name="International rice genome sequencing project (IRGSP)"/>
        </authorList>
    </citation>
    <scope>NUCLEOTIDE SEQUENCE [LARGE SCALE GENOMIC DNA]</scope>
    <source>
        <strain>cv. Nipponbare</strain>
    </source>
</reference>
<reference key="3">
    <citation type="journal article" date="2008" name="Nucleic Acids Res.">
        <title>The rice annotation project database (RAP-DB): 2008 update.</title>
        <authorList>
            <consortium name="The rice annotation project (RAP)"/>
        </authorList>
    </citation>
    <scope>GENOME REANNOTATION</scope>
    <source>
        <strain>cv. Nipponbare</strain>
    </source>
</reference>
<reference key="4">
    <citation type="journal article" date="2013" name="Rice">
        <title>Improvement of the Oryza sativa Nipponbare reference genome using next generation sequence and optical map data.</title>
        <authorList>
            <person name="Kawahara Y."/>
            <person name="de la Bastide M."/>
            <person name="Hamilton J.P."/>
            <person name="Kanamori H."/>
            <person name="McCombie W.R."/>
            <person name="Ouyang S."/>
            <person name="Schwartz D.C."/>
            <person name="Tanaka T."/>
            <person name="Wu J."/>
            <person name="Zhou S."/>
            <person name="Childs K.L."/>
            <person name="Davidson R.M."/>
            <person name="Lin H."/>
            <person name="Quesada-Ocampo L."/>
            <person name="Vaillancourt B."/>
            <person name="Sakai H."/>
            <person name="Lee S.S."/>
            <person name="Kim J."/>
            <person name="Numa H."/>
            <person name="Itoh T."/>
            <person name="Buell C.R."/>
            <person name="Matsumoto T."/>
        </authorList>
    </citation>
    <scope>GENOME REANNOTATION</scope>
    <source>
        <strain>cv. Nipponbare</strain>
    </source>
</reference>
<reference key="5">
    <citation type="journal article" date="2009" name="Planta">
        <title>Genome-wide identification of BURP domain-containing genes in rice reveals a gene family with diverse structures and responses to abiotic stresses.</title>
        <authorList>
            <person name="Ding X."/>
            <person name="Hou X."/>
            <person name="Xie K."/>
            <person name="Xiong L."/>
        </authorList>
    </citation>
    <scope>TISSUE SPECIFICITY</scope>
    <scope>GENE NOMENCLATURE</scope>
</reference>
<accession>Q7F8U7</accession>
<accession>A0A0P0XHH8</accession>
<name>BURPD_ORYSJ</name>
<keyword id="KW-0325">Glycoprotein</keyword>
<keyword id="KW-1185">Reference proteome</keyword>
<keyword id="KW-0732">Signal</keyword>
<proteinExistence type="evidence at protein level"/>
<organism>
    <name type="scientific">Oryza sativa subsp. japonica</name>
    <name type="common">Rice</name>
    <dbReference type="NCBI Taxonomy" id="39947"/>
    <lineage>
        <taxon>Eukaryota</taxon>
        <taxon>Viridiplantae</taxon>
        <taxon>Streptophyta</taxon>
        <taxon>Embryophyta</taxon>
        <taxon>Tracheophyta</taxon>
        <taxon>Spermatophyta</taxon>
        <taxon>Magnoliopsida</taxon>
        <taxon>Liliopsida</taxon>
        <taxon>Poales</taxon>
        <taxon>Poaceae</taxon>
        <taxon>BOP clade</taxon>
        <taxon>Oryzoideae</taxon>
        <taxon>Oryzeae</taxon>
        <taxon>Oryzinae</taxon>
        <taxon>Oryza</taxon>
        <taxon>Oryza sativa</taxon>
    </lineage>
</organism>
<protein>
    <recommendedName>
        <fullName>BURP domain-containing protein 13</fullName>
        <shortName>OsBURP13</shortName>
    </recommendedName>
    <alternativeName>
        <fullName>Protein RAFTIN 1</fullName>
        <shortName>OsRAFTIN1</shortName>
    </alternativeName>
</protein>
<evidence type="ECO:0000255" key="1"/>
<evidence type="ECO:0000255" key="2">
    <source>
        <dbReference type="PROSITE-ProRule" id="PRU00604"/>
    </source>
</evidence>
<evidence type="ECO:0000269" key="3">
    <source>
    </source>
</evidence>
<evidence type="ECO:0000269" key="4">
    <source>
    </source>
</evidence>
<feature type="signal peptide" evidence="1">
    <location>
        <begin position="1"/>
        <end position="23"/>
    </location>
</feature>
<feature type="chain" id="PRO_0000375840" description="BURP domain-containing protein 13">
    <location>
        <begin position="24"/>
        <end position="412"/>
    </location>
</feature>
<feature type="domain" description="BURP" evidence="2">
    <location>
        <begin position="190"/>
        <end position="406"/>
    </location>
</feature>
<feature type="glycosylation site" description="N-linked (GlcNAc...) asparagine" evidence="1">
    <location>
        <position position="369"/>
    </location>
</feature>
<dbReference type="EMBL" id="AJ575667">
    <property type="protein sequence ID" value="CAE02617.1"/>
    <property type="molecule type" value="mRNA"/>
</dbReference>
<dbReference type="EMBL" id="AJ575668">
    <property type="protein sequence ID" value="CAE02618.1"/>
    <property type="molecule type" value="Genomic_DNA"/>
</dbReference>
<dbReference type="EMBL" id="AP000364">
    <property type="protein sequence ID" value="BAD08707.1"/>
    <property type="molecule type" value="Genomic_DNA"/>
</dbReference>
<dbReference type="EMBL" id="AP005148">
    <property type="protein sequence ID" value="BAD10134.1"/>
    <property type="molecule type" value="Genomic_DNA"/>
</dbReference>
<dbReference type="EMBL" id="AP008214">
    <property type="protein sequence ID" value="BAF24051.1"/>
    <property type="molecule type" value="Genomic_DNA"/>
</dbReference>
<dbReference type="EMBL" id="AP014964">
    <property type="protein sequence ID" value="BAT06071.1"/>
    <property type="molecule type" value="Genomic_DNA"/>
</dbReference>
<dbReference type="RefSeq" id="XP_015649559.1">
    <property type="nucleotide sequence ID" value="XM_015794073.1"/>
</dbReference>
<dbReference type="SMR" id="Q7F8U7"/>
<dbReference type="FunCoup" id="Q7F8U7">
    <property type="interactions" value="356"/>
</dbReference>
<dbReference type="STRING" id="39947.Q7F8U7"/>
<dbReference type="GlyCosmos" id="Q7F8U7">
    <property type="glycosylation" value="1 site, No reported glycans"/>
</dbReference>
<dbReference type="PaxDb" id="39947-Q7F8U7"/>
<dbReference type="EnsemblPlants" id="Os08t0496800-01">
    <property type="protein sequence ID" value="Os08t0496800-01"/>
    <property type="gene ID" value="Os08g0496800"/>
</dbReference>
<dbReference type="Gramene" id="Os08t0496800-01">
    <property type="protein sequence ID" value="Os08t0496800-01"/>
    <property type="gene ID" value="Os08g0496800"/>
</dbReference>
<dbReference type="KEGG" id="dosa:Os08g0496800"/>
<dbReference type="eggNOG" id="ENOG502QQHP">
    <property type="taxonomic scope" value="Eukaryota"/>
</dbReference>
<dbReference type="HOGENOM" id="CLU_011822_1_0_1"/>
<dbReference type="InParanoid" id="Q7F8U7"/>
<dbReference type="OMA" id="TLRTCEW"/>
<dbReference type="OrthoDB" id="1909293at2759"/>
<dbReference type="PlantReactome" id="R-OSA-8986768">
    <property type="pathway name" value="Anther and pollen development"/>
</dbReference>
<dbReference type="Proteomes" id="UP000000763">
    <property type="component" value="Chromosome 8"/>
</dbReference>
<dbReference type="Proteomes" id="UP000059680">
    <property type="component" value="Chromosome 8"/>
</dbReference>
<dbReference type="GO" id="GO:0043668">
    <property type="term" value="C:exine"/>
    <property type="evidence" value="ECO:0000250"/>
    <property type="project" value="UniProtKB"/>
</dbReference>
<dbReference type="GO" id="GO:0009555">
    <property type="term" value="P:pollen development"/>
    <property type="evidence" value="ECO:0000318"/>
    <property type="project" value="GO_Central"/>
</dbReference>
<dbReference type="GO" id="GO:0010152">
    <property type="term" value="P:pollen maturation"/>
    <property type="evidence" value="ECO:0000315"/>
    <property type="project" value="UniProtKB"/>
</dbReference>
<dbReference type="InterPro" id="IPR044816">
    <property type="entry name" value="BURP"/>
</dbReference>
<dbReference type="InterPro" id="IPR004873">
    <property type="entry name" value="BURP_dom"/>
</dbReference>
<dbReference type="PANTHER" id="PTHR31236">
    <property type="entry name" value="BURP DOMAIN PROTEIN USPL1-LIKE"/>
    <property type="match status" value="1"/>
</dbReference>
<dbReference type="PANTHER" id="PTHR31236:SF10">
    <property type="entry name" value="BURP DOMAIN-CONTAINING PROTEIN 13"/>
    <property type="match status" value="1"/>
</dbReference>
<dbReference type="Pfam" id="PF03181">
    <property type="entry name" value="BURP"/>
    <property type="match status" value="1"/>
</dbReference>
<dbReference type="SMART" id="SM01045">
    <property type="entry name" value="BURP"/>
    <property type="match status" value="1"/>
</dbReference>
<dbReference type="PROSITE" id="PS51277">
    <property type="entry name" value="BURP"/>
    <property type="match status" value="1"/>
</dbReference>
<gene>
    <name type="primary">BURP13</name>
    <name type="synonym">RAFTIN1</name>
    <name type="ordered locus">Os08g0496800</name>
    <name type="ordered locus">LOC_Os08g38810</name>
    <name type="ORF">B1142B04.37</name>
    <name type="ORF">P0026F07.8</name>
</gene>